<protein>
    <recommendedName>
        <fullName evidence="1">Ureidoglycolate lyase</fullName>
        <ecNumber evidence="1">4.3.2.3</ecNumber>
    </recommendedName>
    <alternativeName>
        <fullName evidence="1">Ureidoglycolatase</fullName>
    </alternativeName>
</protein>
<keyword id="KW-0456">Lyase</keyword>
<keyword id="KW-0659">Purine metabolism</keyword>
<evidence type="ECO:0000255" key="1">
    <source>
        <dbReference type="HAMAP-Rule" id="MF_00616"/>
    </source>
</evidence>
<accession>A5W0S6</accession>
<dbReference type="EC" id="4.3.2.3" evidence="1"/>
<dbReference type="EMBL" id="CP000712">
    <property type="protein sequence ID" value="ABQ77736.1"/>
    <property type="molecule type" value="Genomic_DNA"/>
</dbReference>
<dbReference type="SMR" id="A5W0S6"/>
<dbReference type="KEGG" id="ppf:Pput_1580"/>
<dbReference type="eggNOG" id="COG3194">
    <property type="taxonomic scope" value="Bacteria"/>
</dbReference>
<dbReference type="HOGENOM" id="CLU_070848_1_0_6"/>
<dbReference type="UniPathway" id="UPA00395"/>
<dbReference type="GO" id="GO:0004848">
    <property type="term" value="F:ureidoglycolate hydrolase activity"/>
    <property type="evidence" value="ECO:0007669"/>
    <property type="project" value="InterPro"/>
</dbReference>
<dbReference type="GO" id="GO:0050385">
    <property type="term" value="F:ureidoglycolate lyase activity"/>
    <property type="evidence" value="ECO:0007669"/>
    <property type="project" value="UniProtKB-UniRule"/>
</dbReference>
<dbReference type="GO" id="GO:0000256">
    <property type="term" value="P:allantoin catabolic process"/>
    <property type="evidence" value="ECO:0007669"/>
    <property type="project" value="UniProtKB-UniRule"/>
</dbReference>
<dbReference type="GO" id="GO:0006145">
    <property type="term" value="P:purine nucleobase catabolic process"/>
    <property type="evidence" value="ECO:0007669"/>
    <property type="project" value="UniProtKB-UniRule"/>
</dbReference>
<dbReference type="CDD" id="cd20298">
    <property type="entry name" value="cupin_UAH"/>
    <property type="match status" value="1"/>
</dbReference>
<dbReference type="Gene3D" id="2.60.120.480">
    <property type="entry name" value="Ureidoglycolate hydrolase"/>
    <property type="match status" value="1"/>
</dbReference>
<dbReference type="HAMAP" id="MF_00616">
    <property type="entry name" value="Ureidogly_lyase"/>
    <property type="match status" value="1"/>
</dbReference>
<dbReference type="InterPro" id="IPR011051">
    <property type="entry name" value="RmlC_Cupin_sf"/>
</dbReference>
<dbReference type="InterPro" id="IPR047233">
    <property type="entry name" value="UAH_cupin"/>
</dbReference>
<dbReference type="InterPro" id="IPR007247">
    <property type="entry name" value="Ureidogly_lyase"/>
</dbReference>
<dbReference type="InterPro" id="IPR023525">
    <property type="entry name" value="Ureidogly_lyase_bac"/>
</dbReference>
<dbReference type="InterPro" id="IPR024060">
    <property type="entry name" value="Ureidoglycolate_lyase_dom_sf"/>
</dbReference>
<dbReference type="NCBIfam" id="NF002949">
    <property type="entry name" value="PRK03606.1-2"/>
    <property type="match status" value="1"/>
</dbReference>
<dbReference type="NCBIfam" id="NF009932">
    <property type="entry name" value="PRK13395.1"/>
    <property type="match status" value="1"/>
</dbReference>
<dbReference type="PANTHER" id="PTHR21221">
    <property type="entry name" value="UREIDOGLYCOLATE HYDROLASE"/>
    <property type="match status" value="1"/>
</dbReference>
<dbReference type="PANTHER" id="PTHR21221:SF1">
    <property type="entry name" value="UREIDOGLYCOLATE LYASE"/>
    <property type="match status" value="1"/>
</dbReference>
<dbReference type="Pfam" id="PF04115">
    <property type="entry name" value="Ureidogly_lyase"/>
    <property type="match status" value="1"/>
</dbReference>
<dbReference type="PIRSF" id="PIRSF017306">
    <property type="entry name" value="Ureidogly_hydro"/>
    <property type="match status" value="1"/>
</dbReference>
<dbReference type="SUPFAM" id="SSF51182">
    <property type="entry name" value="RmlC-like cupins"/>
    <property type="match status" value="1"/>
</dbReference>
<name>ALLA_PSEP1</name>
<sequence length="167" mass="18768">MRTLMIEPLTKEAFAQFGDVIETDGSDHFMINNGSTMRFHKLATVETAEPEDKAIISIFRADAQDMPLTVRMLERHPLGSQAFIPLLGNPFLIVVAPVGDAPVSGLVRAFRSNGRQGVNYHRGVWHHPVLTIEKRDDFLVVDRSGSGNNCDEHYFTEEQMLILNPHQ</sequence>
<proteinExistence type="inferred from homology"/>
<feature type="chain" id="PRO_1000061363" description="Ureidoglycolate lyase">
    <location>
        <begin position="1"/>
        <end position="167"/>
    </location>
</feature>
<comment type="function">
    <text evidence="1">Catalyzes the catabolism of the allantoin degradation intermediate (S)-ureidoglycolate, generating urea and glyoxylate. Involved in the utilization of allantoin as nitrogen source.</text>
</comment>
<comment type="catalytic activity">
    <reaction evidence="1">
        <text>(S)-ureidoglycolate = urea + glyoxylate</text>
        <dbReference type="Rhea" id="RHEA:11304"/>
        <dbReference type="ChEBI" id="CHEBI:16199"/>
        <dbReference type="ChEBI" id="CHEBI:36655"/>
        <dbReference type="ChEBI" id="CHEBI:57296"/>
        <dbReference type="EC" id="4.3.2.3"/>
    </reaction>
</comment>
<comment type="cofactor">
    <cofactor evidence="1">
        <name>Ni(2+)</name>
        <dbReference type="ChEBI" id="CHEBI:49786"/>
    </cofactor>
</comment>
<comment type="pathway">
    <text evidence="1">Nitrogen metabolism; (S)-allantoin degradation.</text>
</comment>
<comment type="subunit">
    <text evidence="1">Homodimer.</text>
</comment>
<comment type="similarity">
    <text evidence="1">Belongs to the ureidoglycolate lyase family.</text>
</comment>
<organism>
    <name type="scientific">Pseudomonas putida (strain ATCC 700007 / DSM 6899 / JCM 31910 / BCRC 17059 / LMG 24140 / F1)</name>
    <dbReference type="NCBI Taxonomy" id="351746"/>
    <lineage>
        <taxon>Bacteria</taxon>
        <taxon>Pseudomonadati</taxon>
        <taxon>Pseudomonadota</taxon>
        <taxon>Gammaproteobacteria</taxon>
        <taxon>Pseudomonadales</taxon>
        <taxon>Pseudomonadaceae</taxon>
        <taxon>Pseudomonas</taxon>
    </lineage>
</organism>
<gene>
    <name evidence="1" type="primary">allA</name>
    <name type="ordered locus">Pput_1580</name>
</gene>
<reference key="1">
    <citation type="submission" date="2007-05" db="EMBL/GenBank/DDBJ databases">
        <title>Complete sequence of Pseudomonas putida F1.</title>
        <authorList>
            <consortium name="US DOE Joint Genome Institute"/>
            <person name="Copeland A."/>
            <person name="Lucas S."/>
            <person name="Lapidus A."/>
            <person name="Barry K."/>
            <person name="Detter J.C."/>
            <person name="Glavina del Rio T."/>
            <person name="Hammon N."/>
            <person name="Israni S."/>
            <person name="Dalin E."/>
            <person name="Tice H."/>
            <person name="Pitluck S."/>
            <person name="Chain P."/>
            <person name="Malfatti S."/>
            <person name="Shin M."/>
            <person name="Vergez L."/>
            <person name="Schmutz J."/>
            <person name="Larimer F."/>
            <person name="Land M."/>
            <person name="Hauser L."/>
            <person name="Kyrpides N."/>
            <person name="Lykidis A."/>
            <person name="Parales R."/>
            <person name="Richardson P."/>
        </authorList>
    </citation>
    <scope>NUCLEOTIDE SEQUENCE [LARGE SCALE GENOMIC DNA]</scope>
    <source>
        <strain>ATCC 700007 / DSM 6899 / JCM 31910 / BCRC 17059 / LMG 24140 / F1</strain>
    </source>
</reference>